<organism>
    <name type="scientific">Staphylococcus epidermidis (strain ATCC 12228 / FDA PCI 1200)</name>
    <dbReference type="NCBI Taxonomy" id="176280"/>
    <lineage>
        <taxon>Bacteria</taxon>
        <taxon>Bacillati</taxon>
        <taxon>Bacillota</taxon>
        <taxon>Bacilli</taxon>
        <taxon>Bacillales</taxon>
        <taxon>Staphylococcaceae</taxon>
        <taxon>Staphylococcus</taxon>
    </lineage>
</organism>
<reference key="1">
    <citation type="journal article" date="2003" name="Mol. Microbiol.">
        <title>Genome-based analysis of virulence genes in a non-biofilm-forming Staphylococcus epidermidis strain (ATCC 12228).</title>
        <authorList>
            <person name="Zhang Y.-Q."/>
            <person name="Ren S.-X."/>
            <person name="Li H.-L."/>
            <person name="Wang Y.-X."/>
            <person name="Fu G."/>
            <person name="Yang J."/>
            <person name="Qin Z.-Q."/>
            <person name="Miao Y.-G."/>
            <person name="Wang W.-Y."/>
            <person name="Chen R.-S."/>
            <person name="Shen Y."/>
            <person name="Chen Z."/>
            <person name="Yuan Z.-H."/>
            <person name="Zhao G.-P."/>
            <person name="Qu D."/>
            <person name="Danchin A."/>
            <person name="Wen Y.-M."/>
        </authorList>
    </citation>
    <scope>NUCLEOTIDE SEQUENCE [LARGE SCALE GENOMIC DNA]</scope>
    <source>
        <strain>ATCC 12228 / FDA PCI 1200</strain>
    </source>
</reference>
<comment type="function">
    <text evidence="1">Involved in cold stress response.</text>
</comment>
<comment type="subcellular location">
    <subcellularLocation>
        <location evidence="1">Cytoplasm</location>
    </subcellularLocation>
</comment>
<protein>
    <recommendedName>
        <fullName>Cold shock protein CspA</fullName>
    </recommendedName>
</protein>
<accession>Q8CP90</accession>
<evidence type="ECO:0000250" key="1"/>
<proteinExistence type="inferred from homology"/>
<dbReference type="EMBL" id="AE015929">
    <property type="protein sequence ID" value="AAO04683.1"/>
    <property type="molecule type" value="Genomic_DNA"/>
</dbReference>
<dbReference type="RefSeq" id="NP_764641.1">
    <property type="nucleotide sequence ID" value="NC_004461.1"/>
</dbReference>
<dbReference type="RefSeq" id="WP_001831260.1">
    <property type="nucleotide sequence ID" value="NZ_WBME01000002.1"/>
</dbReference>
<dbReference type="SMR" id="Q8CP90"/>
<dbReference type="GeneID" id="97287790"/>
<dbReference type="KEGG" id="sep:SE_1086"/>
<dbReference type="PATRIC" id="fig|176280.10.peg.1061"/>
<dbReference type="eggNOG" id="COG1278">
    <property type="taxonomic scope" value="Bacteria"/>
</dbReference>
<dbReference type="HOGENOM" id="CLU_117621_6_1_9"/>
<dbReference type="OrthoDB" id="9805039at2"/>
<dbReference type="PRO" id="PR:Q8CP90"/>
<dbReference type="Proteomes" id="UP000001411">
    <property type="component" value="Chromosome"/>
</dbReference>
<dbReference type="GO" id="GO:0005737">
    <property type="term" value="C:cytoplasm"/>
    <property type="evidence" value="ECO:0007669"/>
    <property type="project" value="UniProtKB-SubCell"/>
</dbReference>
<dbReference type="GO" id="GO:0003676">
    <property type="term" value="F:nucleic acid binding"/>
    <property type="evidence" value="ECO:0007669"/>
    <property type="project" value="InterPro"/>
</dbReference>
<dbReference type="CDD" id="cd04458">
    <property type="entry name" value="CSP_CDS"/>
    <property type="match status" value="1"/>
</dbReference>
<dbReference type="FunFam" id="2.40.50.140:FF:000006">
    <property type="entry name" value="Cold shock protein CspC"/>
    <property type="match status" value="1"/>
</dbReference>
<dbReference type="Gene3D" id="6.20.370.130">
    <property type="match status" value="1"/>
</dbReference>
<dbReference type="Gene3D" id="2.40.50.140">
    <property type="entry name" value="Nucleic acid-binding proteins"/>
    <property type="match status" value="1"/>
</dbReference>
<dbReference type="InterPro" id="IPR012156">
    <property type="entry name" value="Cold_shock_CspA"/>
</dbReference>
<dbReference type="InterPro" id="IPR050181">
    <property type="entry name" value="Cold_shock_domain"/>
</dbReference>
<dbReference type="InterPro" id="IPR011129">
    <property type="entry name" value="CSD"/>
</dbReference>
<dbReference type="InterPro" id="IPR019844">
    <property type="entry name" value="CSD_CS"/>
</dbReference>
<dbReference type="InterPro" id="IPR002059">
    <property type="entry name" value="CSP_DNA-bd"/>
</dbReference>
<dbReference type="InterPro" id="IPR012340">
    <property type="entry name" value="NA-bd_OB-fold"/>
</dbReference>
<dbReference type="PANTHER" id="PTHR11544">
    <property type="entry name" value="COLD SHOCK DOMAIN CONTAINING PROTEINS"/>
    <property type="match status" value="1"/>
</dbReference>
<dbReference type="Pfam" id="PF00313">
    <property type="entry name" value="CSD"/>
    <property type="match status" value="1"/>
</dbReference>
<dbReference type="PIRSF" id="PIRSF002599">
    <property type="entry name" value="Cold_shock_A"/>
    <property type="match status" value="1"/>
</dbReference>
<dbReference type="PRINTS" id="PR00050">
    <property type="entry name" value="COLDSHOCK"/>
</dbReference>
<dbReference type="SMART" id="SM00357">
    <property type="entry name" value="CSP"/>
    <property type="match status" value="1"/>
</dbReference>
<dbReference type="SUPFAM" id="SSF50249">
    <property type="entry name" value="Nucleic acid-binding proteins"/>
    <property type="match status" value="1"/>
</dbReference>
<dbReference type="PROSITE" id="PS00352">
    <property type="entry name" value="CSD_1"/>
    <property type="match status" value="1"/>
</dbReference>
<dbReference type="PROSITE" id="PS51857">
    <property type="entry name" value="CSD_2"/>
    <property type="match status" value="1"/>
</dbReference>
<feature type="chain" id="PRO_0000262548" description="Cold shock protein CspA">
    <location>
        <begin position="1"/>
        <end position="66"/>
    </location>
</feature>
<feature type="domain" description="CSD">
    <location>
        <begin position="1"/>
        <end position="66"/>
    </location>
</feature>
<gene>
    <name type="primary">cspA</name>
    <name type="ordered locus">SE_1086</name>
</gene>
<keyword id="KW-0963">Cytoplasm</keyword>
<name>CSPA_STAES</name>
<sequence>MKQGTVKWFNAEKGFGFIEVEGENDVFVHFSAINQEGYKSLEEGQSVEFEVVEGDRGPQAANVVKL</sequence>